<protein>
    <recommendedName>
        <fullName evidence="4">RxLR effector protein Avh240</fullName>
    </recommendedName>
    <alternativeName>
        <fullName evidence="4">Avirulence homolog protein 240</fullName>
    </alternativeName>
</protein>
<gene>
    <name evidence="4" type="primary">Avh240</name>
</gene>
<sequence>MRPYFTLLLALAFILACTNLVEADAGRVLETTTNEHARHLRTAVASVVDLPDDEDERLLGYNTVQLWRMRRTANKLMNGKLTTQKEAALKKWMASQQDKFLAKWLKSSSVYPDQVYSKLGLTKLGASAKSSPNYQLYEKYTEALLQRWTNFKASPDTVYKSLRLDKLGAKAPQSPSYPMYEKYLQTFFRNQPAN</sequence>
<accession>E0W4T1</accession>
<organism>
    <name type="scientific">Phytophthora sojae</name>
    <name type="common">Soybean stem and root rot agent</name>
    <name type="synonym">Phytophthora megasperma f. sp. glycines</name>
    <dbReference type="NCBI Taxonomy" id="67593"/>
    <lineage>
        <taxon>Eukaryota</taxon>
        <taxon>Sar</taxon>
        <taxon>Stramenopiles</taxon>
        <taxon>Oomycota</taxon>
        <taxon>Peronosporales</taxon>
        <taxon>Peronosporaceae</taxon>
        <taxon>Phytophthora</taxon>
    </lineage>
</organism>
<name>AV240_PHYSO</name>
<keyword id="KW-1032">Host cell membrane</keyword>
<keyword id="KW-1043">Host membrane</keyword>
<keyword id="KW-0472">Membrane</keyword>
<keyword id="KW-0964">Secreted</keyword>
<keyword id="KW-0732">Signal</keyword>
<keyword id="KW-0843">Virulence</keyword>
<dbReference type="EMBL" id="JN254191">
    <property type="protein sequence ID" value="AEK81004.1"/>
    <property type="molecule type" value="Genomic_DNA"/>
</dbReference>
<dbReference type="EMBL" id="JN254192">
    <property type="protein sequence ID" value="AEK81005.1"/>
    <property type="molecule type" value="Genomic_DNA"/>
</dbReference>
<dbReference type="EMBL" id="JN254193">
    <property type="protein sequence ID" value="AEK81006.1"/>
    <property type="molecule type" value="Genomic_DNA"/>
</dbReference>
<dbReference type="RefSeq" id="XP_009536419.1">
    <property type="nucleotide sequence ID" value="XM_009538124.1"/>
</dbReference>
<dbReference type="SMR" id="E0W4T1"/>
<dbReference type="KEGG" id="psoj:PHYSODRAFT_288823"/>
<dbReference type="VEuPathDB" id="FungiDB:PHYSODRAFT_288823"/>
<dbReference type="HOGENOM" id="CLU_1258286_0_0_1"/>
<dbReference type="OMA" id="TNEHARH"/>
<dbReference type="OrthoDB" id="128395at2759"/>
<dbReference type="GO" id="GO:0005576">
    <property type="term" value="C:extracellular region"/>
    <property type="evidence" value="ECO:0007669"/>
    <property type="project" value="UniProtKB-SubCell"/>
</dbReference>
<dbReference type="GO" id="GO:0020002">
    <property type="term" value="C:host cell plasma membrane"/>
    <property type="evidence" value="ECO:0007669"/>
    <property type="project" value="UniProtKB-SubCell"/>
</dbReference>
<dbReference type="GO" id="GO:0016020">
    <property type="term" value="C:membrane"/>
    <property type="evidence" value="ECO:0007669"/>
    <property type="project" value="UniProtKB-KW"/>
</dbReference>
<reference key="1">
    <citation type="journal article" date="2011" name="Plant Cell">
        <title>Transcriptional programming and functional interactions within the Phytophthora sojae RXLR effector repertoire.</title>
        <authorList>
            <person name="Wang Q."/>
            <person name="Han C."/>
            <person name="Ferreira A.O."/>
            <person name="Yu X."/>
            <person name="Ye W."/>
            <person name="Tripathy S."/>
            <person name="Kale S.D."/>
            <person name="Gu B."/>
            <person name="Sheng Y."/>
            <person name="Sui Y."/>
            <person name="Wang X."/>
            <person name="Zhang Z."/>
            <person name="Cheng B."/>
            <person name="Dong S."/>
            <person name="Shan W."/>
            <person name="Zheng X."/>
            <person name="Dou D."/>
            <person name="Tyler B.M."/>
            <person name="Wang Y."/>
        </authorList>
    </citation>
    <scope>NUCLEOTIDE SEQUENCE [GENOMIC DNA]</scope>
    <scope>IDENTIFICATION</scope>
    <scope>FUNCTION</scope>
    <scope>INDUCTION</scope>
    <scope>DOMAIN</scope>
    <source>
        <strain>P7064</strain>
        <strain>P7074</strain>
        <strain>P7076</strain>
    </source>
</reference>
<feature type="signal peptide" evidence="2">
    <location>
        <begin position="1"/>
        <end position="23"/>
    </location>
</feature>
<feature type="chain" id="PRO_5007653096" description="RxLR effector protein Avh240">
    <location>
        <begin position="24"/>
        <end position="194"/>
    </location>
</feature>
<feature type="region of interest" description="Host plasma membrane-binding" evidence="1">
    <location>
        <begin position="58"/>
        <end position="108"/>
    </location>
</feature>
<feature type="short sequence motif" description="RxLR-dEER" evidence="6">
    <location>
        <begin position="38"/>
        <end position="57"/>
    </location>
</feature>
<comment type="function">
    <text evidence="1 3">Effector that suppresses plant defense responses during the early stages of pathogen infection (PubMed:21653195). Suppresses cell death induced by effectors and PAMPs in plant hosts (PubMed:21653195). Avh240 dimerizes and localizes at the plasma membrane to interfere with aspartic protease AP1 secretion, which presents an effective mechanism by which effector proteins suppress plant apoplastic immunity (By similarity).</text>
</comment>
<comment type="subunit">
    <text evidence="1">Homodimer (By similarity). Interacts with host soybean aspartic protease AP1 (By similarity).</text>
</comment>
<comment type="subcellular location">
    <subcellularLocation>
        <location evidence="1">Secreted</location>
    </subcellularLocation>
    <subcellularLocation>
        <location evidence="1">Host cell membrane</location>
    </subcellularLocation>
    <text evidence="1">Plasma membrane localization is independent on self-dimerization but required for virulence.</text>
</comment>
<comment type="induction">
    <text evidence="3">Expression is strongly up-regulated during the early stages of infection.</text>
</comment>
<comment type="domain">
    <text evidence="6">The RxLR-dEER motif acts to carry the protein into the host cell cytoplasm through binding to cell surface phosphatidylinositol-3-phosphate.</text>
</comment>
<comment type="domain">
    <text evidence="1">The alpha 1 and alpha 2 helices (residues 58-108) are required for the localization the plasma membrane.</text>
</comment>
<comment type="similarity">
    <text evidence="5">Belongs to the RxLR effector family.</text>
</comment>
<proteinExistence type="evidence at transcript level"/>
<evidence type="ECO:0000250" key="1">
    <source>
        <dbReference type="UniProtKB" id="G5A8M1"/>
    </source>
</evidence>
<evidence type="ECO:0000255" key="2"/>
<evidence type="ECO:0000269" key="3">
    <source>
    </source>
</evidence>
<evidence type="ECO:0000303" key="4">
    <source>
    </source>
</evidence>
<evidence type="ECO:0000305" key="5"/>
<evidence type="ECO:0000305" key="6">
    <source>
    </source>
</evidence>